<protein>
    <recommendedName>
        <fullName evidence="1">Hydroxyethylthiazole kinase</fullName>
        <ecNumber evidence="1">2.7.1.50</ecNumber>
    </recommendedName>
    <alternativeName>
        <fullName evidence="1">4-methyl-5-beta-hydroxyethylthiazole kinase</fullName>
        <shortName evidence="1">TH kinase</shortName>
        <shortName evidence="1">Thz kinase</shortName>
    </alternativeName>
</protein>
<evidence type="ECO:0000255" key="1">
    <source>
        <dbReference type="HAMAP-Rule" id="MF_00228"/>
    </source>
</evidence>
<accession>B2G7Q2</accession>
<feature type="chain" id="PRO_0000383873" description="Hydroxyethylthiazole kinase">
    <location>
        <begin position="1"/>
        <end position="269"/>
    </location>
</feature>
<feature type="binding site" evidence="1">
    <location>
        <position position="46"/>
    </location>
    <ligand>
        <name>substrate</name>
    </ligand>
</feature>
<feature type="binding site" evidence="1">
    <location>
        <position position="121"/>
    </location>
    <ligand>
        <name>ATP</name>
        <dbReference type="ChEBI" id="CHEBI:30616"/>
    </ligand>
</feature>
<feature type="binding site" evidence="1">
    <location>
        <position position="166"/>
    </location>
    <ligand>
        <name>ATP</name>
        <dbReference type="ChEBI" id="CHEBI:30616"/>
    </ligand>
</feature>
<feature type="binding site" evidence="1">
    <location>
        <position position="193"/>
    </location>
    <ligand>
        <name>substrate</name>
    </ligand>
</feature>
<name>THIM_LIMRJ</name>
<keyword id="KW-0067">ATP-binding</keyword>
<keyword id="KW-0418">Kinase</keyword>
<keyword id="KW-0460">Magnesium</keyword>
<keyword id="KW-0479">Metal-binding</keyword>
<keyword id="KW-0547">Nucleotide-binding</keyword>
<keyword id="KW-0784">Thiamine biosynthesis</keyword>
<keyword id="KW-0808">Transferase</keyword>
<sequence>MVQRQINWSLIDRVRAKNPIVLNLANLVTIDKVADAVSAVGASPIMSVEPAEADEMVMLANALSINLGTINEHQATQIRTVLRAATPLKPLVLDPVAVSAVPSRLKFAHSLLNDFHFDVIRGNASEIAALVEADNTSHGIDAGKVPNQVQIAETCARRYHSIVVLTGETDIITDGQVVYENPFSAEMLTMNVGSGDMLSSIIAAFLGITTNTWDACIVATVLVSAAGVLANRYSVGLGSWQVQFFDQLSIMDTKALLEFFDESEEDYLD</sequence>
<dbReference type="EC" id="2.7.1.50" evidence="1"/>
<dbReference type="EMBL" id="AP007281">
    <property type="protein sequence ID" value="BAG25484.1"/>
    <property type="molecule type" value="Genomic_DNA"/>
</dbReference>
<dbReference type="RefSeq" id="WP_003667689.1">
    <property type="nucleotide sequence ID" value="NC_010609.1"/>
</dbReference>
<dbReference type="SMR" id="B2G7Q2"/>
<dbReference type="KEGG" id="lrf:LAR_0968"/>
<dbReference type="HOGENOM" id="CLU_019943_0_0_9"/>
<dbReference type="UniPathway" id="UPA00060">
    <property type="reaction ID" value="UER00139"/>
</dbReference>
<dbReference type="GO" id="GO:0005524">
    <property type="term" value="F:ATP binding"/>
    <property type="evidence" value="ECO:0007669"/>
    <property type="project" value="UniProtKB-UniRule"/>
</dbReference>
<dbReference type="GO" id="GO:0004417">
    <property type="term" value="F:hydroxyethylthiazole kinase activity"/>
    <property type="evidence" value="ECO:0007669"/>
    <property type="project" value="UniProtKB-UniRule"/>
</dbReference>
<dbReference type="GO" id="GO:0000287">
    <property type="term" value="F:magnesium ion binding"/>
    <property type="evidence" value="ECO:0007669"/>
    <property type="project" value="UniProtKB-UniRule"/>
</dbReference>
<dbReference type="GO" id="GO:0009228">
    <property type="term" value="P:thiamine biosynthetic process"/>
    <property type="evidence" value="ECO:0007669"/>
    <property type="project" value="UniProtKB-KW"/>
</dbReference>
<dbReference type="GO" id="GO:0009229">
    <property type="term" value="P:thiamine diphosphate biosynthetic process"/>
    <property type="evidence" value="ECO:0007669"/>
    <property type="project" value="UniProtKB-UniRule"/>
</dbReference>
<dbReference type="CDD" id="cd01170">
    <property type="entry name" value="THZ_kinase"/>
    <property type="match status" value="1"/>
</dbReference>
<dbReference type="Gene3D" id="3.40.1190.20">
    <property type="match status" value="1"/>
</dbReference>
<dbReference type="HAMAP" id="MF_00228">
    <property type="entry name" value="Thz_kinase"/>
    <property type="match status" value="1"/>
</dbReference>
<dbReference type="InterPro" id="IPR000417">
    <property type="entry name" value="Hyethyz_kinase"/>
</dbReference>
<dbReference type="InterPro" id="IPR029056">
    <property type="entry name" value="Ribokinase-like"/>
</dbReference>
<dbReference type="NCBIfam" id="NF006830">
    <property type="entry name" value="PRK09355.1"/>
    <property type="match status" value="1"/>
</dbReference>
<dbReference type="Pfam" id="PF02110">
    <property type="entry name" value="HK"/>
    <property type="match status" value="1"/>
</dbReference>
<dbReference type="PIRSF" id="PIRSF000513">
    <property type="entry name" value="Thz_kinase"/>
    <property type="match status" value="1"/>
</dbReference>
<dbReference type="PRINTS" id="PR01099">
    <property type="entry name" value="HYETHTZKNASE"/>
</dbReference>
<dbReference type="SUPFAM" id="SSF53613">
    <property type="entry name" value="Ribokinase-like"/>
    <property type="match status" value="1"/>
</dbReference>
<gene>
    <name evidence="1" type="primary">thiM</name>
    <name type="ordered locus">LAR_0968</name>
</gene>
<comment type="function">
    <text evidence="1">Catalyzes the phosphorylation of the hydroxyl group of 4-methyl-5-beta-hydroxyethylthiazole (THZ).</text>
</comment>
<comment type="catalytic activity">
    <reaction evidence="1">
        <text>5-(2-hydroxyethyl)-4-methylthiazole + ATP = 4-methyl-5-(2-phosphooxyethyl)-thiazole + ADP + H(+)</text>
        <dbReference type="Rhea" id="RHEA:24212"/>
        <dbReference type="ChEBI" id="CHEBI:15378"/>
        <dbReference type="ChEBI" id="CHEBI:17957"/>
        <dbReference type="ChEBI" id="CHEBI:30616"/>
        <dbReference type="ChEBI" id="CHEBI:58296"/>
        <dbReference type="ChEBI" id="CHEBI:456216"/>
        <dbReference type="EC" id="2.7.1.50"/>
    </reaction>
</comment>
<comment type="cofactor">
    <cofactor evidence="1">
        <name>Mg(2+)</name>
        <dbReference type="ChEBI" id="CHEBI:18420"/>
    </cofactor>
</comment>
<comment type="pathway">
    <text evidence="1">Cofactor biosynthesis; thiamine diphosphate biosynthesis; 4-methyl-5-(2-phosphoethyl)-thiazole from 5-(2-hydroxyethyl)-4-methylthiazole: step 1/1.</text>
</comment>
<comment type="similarity">
    <text evidence="1">Belongs to the Thz kinase family.</text>
</comment>
<proteinExistence type="inferred from homology"/>
<reference key="1">
    <citation type="journal article" date="2008" name="DNA Res.">
        <title>Comparative genome analysis of Lactobacillus reuteri and Lactobacillus fermentum reveal a genomic island for reuterin and cobalamin production.</title>
        <authorList>
            <person name="Morita H."/>
            <person name="Toh H."/>
            <person name="Fukuda S."/>
            <person name="Horikawa H."/>
            <person name="Oshima K."/>
            <person name="Suzuki T."/>
            <person name="Murakami M."/>
            <person name="Hisamatsu S."/>
            <person name="Kato Y."/>
            <person name="Takizawa T."/>
            <person name="Fukuoka H."/>
            <person name="Yoshimura T."/>
            <person name="Itoh K."/>
            <person name="O'Sullivan D.J."/>
            <person name="McKay L.L."/>
            <person name="Ohno H."/>
            <person name="Kikuchi J."/>
            <person name="Masaoka T."/>
            <person name="Hattori M."/>
        </authorList>
    </citation>
    <scope>NUCLEOTIDE SEQUENCE [LARGE SCALE GENOMIC DNA]</scope>
    <source>
        <strain>JCM 1112</strain>
    </source>
</reference>
<organism>
    <name type="scientific">Limosilactobacillus reuteri subsp. reuteri (strain JCM 1112)</name>
    <name type="common">Lactobacillus reuteri</name>
    <dbReference type="NCBI Taxonomy" id="557433"/>
    <lineage>
        <taxon>Bacteria</taxon>
        <taxon>Bacillati</taxon>
        <taxon>Bacillota</taxon>
        <taxon>Bacilli</taxon>
        <taxon>Lactobacillales</taxon>
        <taxon>Lactobacillaceae</taxon>
        <taxon>Limosilactobacillus</taxon>
    </lineage>
</organism>